<evidence type="ECO:0000255" key="1">
    <source>
        <dbReference type="HAMAP-Rule" id="MF_00249"/>
    </source>
</evidence>
<dbReference type="EMBL" id="CP000800">
    <property type="protein sequence ID" value="ABV16775.1"/>
    <property type="molecule type" value="Genomic_DNA"/>
</dbReference>
<dbReference type="RefSeq" id="WP_001293343.1">
    <property type="nucleotide sequence ID" value="NC_009801.1"/>
</dbReference>
<dbReference type="SMR" id="A7ZUE6"/>
<dbReference type="GeneID" id="86944460"/>
<dbReference type="KEGG" id="ecw:EcE24377A_4467"/>
<dbReference type="HOGENOM" id="CLU_033123_0_0_6"/>
<dbReference type="Proteomes" id="UP000001122">
    <property type="component" value="Chromosome"/>
</dbReference>
<dbReference type="GO" id="GO:0009376">
    <property type="term" value="C:HslUV protease complex"/>
    <property type="evidence" value="ECO:0007669"/>
    <property type="project" value="UniProtKB-UniRule"/>
</dbReference>
<dbReference type="GO" id="GO:0005524">
    <property type="term" value="F:ATP binding"/>
    <property type="evidence" value="ECO:0007669"/>
    <property type="project" value="UniProtKB-UniRule"/>
</dbReference>
<dbReference type="GO" id="GO:0016887">
    <property type="term" value="F:ATP hydrolysis activity"/>
    <property type="evidence" value="ECO:0007669"/>
    <property type="project" value="InterPro"/>
</dbReference>
<dbReference type="GO" id="GO:0008233">
    <property type="term" value="F:peptidase activity"/>
    <property type="evidence" value="ECO:0007669"/>
    <property type="project" value="InterPro"/>
</dbReference>
<dbReference type="GO" id="GO:0036402">
    <property type="term" value="F:proteasome-activating activity"/>
    <property type="evidence" value="ECO:0007669"/>
    <property type="project" value="UniProtKB-UniRule"/>
</dbReference>
<dbReference type="GO" id="GO:0043335">
    <property type="term" value="P:protein unfolding"/>
    <property type="evidence" value="ECO:0007669"/>
    <property type="project" value="UniProtKB-UniRule"/>
</dbReference>
<dbReference type="GO" id="GO:0051603">
    <property type="term" value="P:proteolysis involved in protein catabolic process"/>
    <property type="evidence" value="ECO:0007669"/>
    <property type="project" value="TreeGrafter"/>
</dbReference>
<dbReference type="CDD" id="cd19498">
    <property type="entry name" value="RecA-like_HslU"/>
    <property type="match status" value="1"/>
</dbReference>
<dbReference type="FunFam" id="1.10.8.10:FF:000012">
    <property type="entry name" value="ATP-dependent protease ATPase subunit HslU"/>
    <property type="match status" value="1"/>
</dbReference>
<dbReference type="FunFam" id="1.10.8.10:FF:000028">
    <property type="entry name" value="ATP-dependent protease ATPase subunit HslU"/>
    <property type="match status" value="1"/>
</dbReference>
<dbReference type="FunFam" id="1.10.8.60:FF:000027">
    <property type="entry name" value="ATP-dependent protease ATPase subunit HslU"/>
    <property type="match status" value="1"/>
</dbReference>
<dbReference type="FunFam" id="3.40.50.300:FF:000213">
    <property type="entry name" value="ATP-dependent protease ATPase subunit HslU"/>
    <property type="match status" value="1"/>
</dbReference>
<dbReference type="FunFam" id="3.40.50.300:FF:000220">
    <property type="entry name" value="ATP-dependent protease ATPase subunit HslU"/>
    <property type="match status" value="1"/>
</dbReference>
<dbReference type="Gene3D" id="1.10.8.60">
    <property type="match status" value="1"/>
</dbReference>
<dbReference type="Gene3D" id="1.10.8.10">
    <property type="entry name" value="DNA helicase RuvA subunit, C-terminal domain"/>
    <property type="match status" value="2"/>
</dbReference>
<dbReference type="Gene3D" id="3.40.50.300">
    <property type="entry name" value="P-loop containing nucleotide triphosphate hydrolases"/>
    <property type="match status" value="1"/>
</dbReference>
<dbReference type="HAMAP" id="MF_00249">
    <property type="entry name" value="HslU"/>
    <property type="match status" value="1"/>
</dbReference>
<dbReference type="InterPro" id="IPR003593">
    <property type="entry name" value="AAA+_ATPase"/>
</dbReference>
<dbReference type="InterPro" id="IPR050052">
    <property type="entry name" value="ATP-dep_Clp_protease_ClpX"/>
</dbReference>
<dbReference type="InterPro" id="IPR003959">
    <property type="entry name" value="ATPase_AAA_core"/>
</dbReference>
<dbReference type="InterPro" id="IPR019489">
    <property type="entry name" value="Clp_ATPase_C"/>
</dbReference>
<dbReference type="InterPro" id="IPR004491">
    <property type="entry name" value="HslU"/>
</dbReference>
<dbReference type="InterPro" id="IPR027417">
    <property type="entry name" value="P-loop_NTPase"/>
</dbReference>
<dbReference type="NCBIfam" id="TIGR00390">
    <property type="entry name" value="hslU"/>
    <property type="match status" value="1"/>
</dbReference>
<dbReference type="NCBIfam" id="NF003544">
    <property type="entry name" value="PRK05201.1"/>
    <property type="match status" value="1"/>
</dbReference>
<dbReference type="PANTHER" id="PTHR48102">
    <property type="entry name" value="ATP-DEPENDENT CLP PROTEASE ATP-BINDING SUBUNIT CLPX-LIKE, MITOCHONDRIAL-RELATED"/>
    <property type="match status" value="1"/>
</dbReference>
<dbReference type="PANTHER" id="PTHR48102:SF3">
    <property type="entry name" value="ATP-DEPENDENT PROTEASE ATPASE SUBUNIT HSLU"/>
    <property type="match status" value="1"/>
</dbReference>
<dbReference type="Pfam" id="PF00004">
    <property type="entry name" value="AAA"/>
    <property type="match status" value="1"/>
</dbReference>
<dbReference type="Pfam" id="PF07724">
    <property type="entry name" value="AAA_2"/>
    <property type="match status" value="1"/>
</dbReference>
<dbReference type="SMART" id="SM00382">
    <property type="entry name" value="AAA"/>
    <property type="match status" value="1"/>
</dbReference>
<dbReference type="SMART" id="SM01086">
    <property type="entry name" value="ClpB_D2-small"/>
    <property type="match status" value="1"/>
</dbReference>
<dbReference type="SUPFAM" id="SSF52540">
    <property type="entry name" value="P-loop containing nucleoside triphosphate hydrolases"/>
    <property type="match status" value="1"/>
</dbReference>
<accession>A7ZUE6</accession>
<keyword id="KW-0067">ATP-binding</keyword>
<keyword id="KW-0143">Chaperone</keyword>
<keyword id="KW-0963">Cytoplasm</keyword>
<keyword id="KW-0547">Nucleotide-binding</keyword>
<keyword id="KW-1185">Reference proteome</keyword>
<keyword id="KW-0346">Stress response</keyword>
<reference key="1">
    <citation type="journal article" date="2008" name="J. Bacteriol.">
        <title>The pangenome structure of Escherichia coli: comparative genomic analysis of E. coli commensal and pathogenic isolates.</title>
        <authorList>
            <person name="Rasko D.A."/>
            <person name="Rosovitz M.J."/>
            <person name="Myers G.S.A."/>
            <person name="Mongodin E.F."/>
            <person name="Fricke W.F."/>
            <person name="Gajer P."/>
            <person name="Crabtree J."/>
            <person name="Sebaihia M."/>
            <person name="Thomson N.R."/>
            <person name="Chaudhuri R."/>
            <person name="Henderson I.R."/>
            <person name="Sperandio V."/>
            <person name="Ravel J."/>
        </authorList>
    </citation>
    <scope>NUCLEOTIDE SEQUENCE [LARGE SCALE GENOMIC DNA]</scope>
    <source>
        <strain>E24377A / ETEC</strain>
    </source>
</reference>
<name>HSLU_ECO24</name>
<comment type="function">
    <text evidence="1">ATPase subunit of a proteasome-like degradation complex; this subunit has chaperone activity. The binding of ATP and its subsequent hydrolysis by HslU are essential for unfolding of protein substrates subsequently hydrolyzed by HslV. HslU recognizes the N-terminal part of its protein substrates and unfolds these before they are guided to HslV for hydrolysis.</text>
</comment>
<comment type="subunit">
    <text evidence="1">A double ring-shaped homohexamer of HslV is capped on each side by a ring-shaped HslU homohexamer. The assembly of the HslU/HslV complex is dependent on binding of ATP.</text>
</comment>
<comment type="subcellular location">
    <subcellularLocation>
        <location evidence="1">Cytoplasm</location>
    </subcellularLocation>
</comment>
<comment type="induction">
    <text evidence="1">By heat shock.</text>
</comment>
<comment type="similarity">
    <text evidence="1">Belongs to the ClpX chaperone family. HslU subfamily.</text>
</comment>
<sequence length="443" mass="49593">MSEMTPREIVSELDKHIIGQDNAKRSVAIALRNRWRRMQLNEELRHEVTPKNILMIGPTGVGKTEIARRLAKLANAPFIKVEATKFTEVGYVGKEVDSIIRDLTDAAVKMVRVQAIEKNRYRAEELAEERILDVLIPPAKNNWGQTEQQQEPSAARQAFRKKLREGQLDDKEIEIDLAAAPMGVEIMAPPGMEEMTSQLQSMFQNLGGQKQKARKLKIKDAMKLLIEEEAAKLVNPEELKQDAIDAVEQHGIVFIDEIDKICKRGESSGPDVSREGVQRDLLPLVEGCTVSTKHGMVKTDHILFIASGAFQIAKPSDLIPELQGRLPIRVELQALTTSDFERILTEPNASITVQYKALMATEGVNIEFTDSGIKRIAEAAWQVNESTENIGARRLHTVLERLMEEISYDASDLSGQTIIIDADYVSKHLDALVADEDLSRFIL</sequence>
<organism>
    <name type="scientific">Escherichia coli O139:H28 (strain E24377A / ETEC)</name>
    <dbReference type="NCBI Taxonomy" id="331111"/>
    <lineage>
        <taxon>Bacteria</taxon>
        <taxon>Pseudomonadati</taxon>
        <taxon>Pseudomonadota</taxon>
        <taxon>Gammaproteobacteria</taxon>
        <taxon>Enterobacterales</taxon>
        <taxon>Enterobacteriaceae</taxon>
        <taxon>Escherichia</taxon>
    </lineage>
</organism>
<proteinExistence type="inferred from homology"/>
<gene>
    <name evidence="1" type="primary">hslU</name>
    <name type="ordered locus">EcE24377A_4467</name>
</gene>
<protein>
    <recommendedName>
        <fullName evidence="1">ATP-dependent protease ATPase subunit HslU</fullName>
    </recommendedName>
    <alternativeName>
        <fullName evidence="1">Heat shock protein HslU</fullName>
    </alternativeName>
    <alternativeName>
        <fullName evidence="1">Unfoldase HslU</fullName>
    </alternativeName>
</protein>
<feature type="chain" id="PRO_1000059022" description="ATP-dependent protease ATPase subunit HslU">
    <location>
        <begin position="1"/>
        <end position="443"/>
    </location>
</feature>
<feature type="binding site" evidence="1">
    <location>
        <position position="18"/>
    </location>
    <ligand>
        <name>ATP</name>
        <dbReference type="ChEBI" id="CHEBI:30616"/>
    </ligand>
</feature>
<feature type="binding site" evidence="1">
    <location>
        <begin position="60"/>
        <end position="65"/>
    </location>
    <ligand>
        <name>ATP</name>
        <dbReference type="ChEBI" id="CHEBI:30616"/>
    </ligand>
</feature>
<feature type="binding site" evidence="1">
    <location>
        <position position="256"/>
    </location>
    <ligand>
        <name>ATP</name>
        <dbReference type="ChEBI" id="CHEBI:30616"/>
    </ligand>
</feature>
<feature type="binding site" evidence="1">
    <location>
        <position position="321"/>
    </location>
    <ligand>
        <name>ATP</name>
        <dbReference type="ChEBI" id="CHEBI:30616"/>
    </ligand>
</feature>
<feature type="binding site" evidence="1">
    <location>
        <position position="393"/>
    </location>
    <ligand>
        <name>ATP</name>
        <dbReference type="ChEBI" id="CHEBI:30616"/>
    </ligand>
</feature>